<accession>B3PZB2</accession>
<dbReference type="EC" id="2.3.1.269" evidence="1"/>
<dbReference type="EMBL" id="CP001074">
    <property type="protein sequence ID" value="ACE89406.1"/>
    <property type="molecule type" value="Genomic_DNA"/>
</dbReference>
<dbReference type="SMR" id="B3PZB2"/>
<dbReference type="KEGG" id="rec:RHECIAT_CH0000412"/>
<dbReference type="eggNOG" id="COG0815">
    <property type="taxonomic scope" value="Bacteria"/>
</dbReference>
<dbReference type="HOGENOM" id="CLU_019563_3_1_5"/>
<dbReference type="UniPathway" id="UPA00666"/>
<dbReference type="Proteomes" id="UP000008817">
    <property type="component" value="Chromosome"/>
</dbReference>
<dbReference type="GO" id="GO:0005886">
    <property type="term" value="C:plasma membrane"/>
    <property type="evidence" value="ECO:0007669"/>
    <property type="project" value="UniProtKB-SubCell"/>
</dbReference>
<dbReference type="GO" id="GO:0016410">
    <property type="term" value="F:N-acyltransferase activity"/>
    <property type="evidence" value="ECO:0007669"/>
    <property type="project" value="UniProtKB-UniRule"/>
</dbReference>
<dbReference type="GO" id="GO:0042158">
    <property type="term" value="P:lipoprotein biosynthetic process"/>
    <property type="evidence" value="ECO:0007669"/>
    <property type="project" value="UniProtKB-UniRule"/>
</dbReference>
<dbReference type="CDD" id="cd07571">
    <property type="entry name" value="ALP_N-acyl_transferase"/>
    <property type="match status" value="1"/>
</dbReference>
<dbReference type="Gene3D" id="3.60.110.10">
    <property type="entry name" value="Carbon-nitrogen hydrolase"/>
    <property type="match status" value="1"/>
</dbReference>
<dbReference type="HAMAP" id="MF_01148">
    <property type="entry name" value="Lnt"/>
    <property type="match status" value="1"/>
</dbReference>
<dbReference type="InterPro" id="IPR004563">
    <property type="entry name" value="Apolipo_AcylTrfase"/>
</dbReference>
<dbReference type="InterPro" id="IPR003010">
    <property type="entry name" value="C-N_Hydrolase"/>
</dbReference>
<dbReference type="InterPro" id="IPR036526">
    <property type="entry name" value="C-N_Hydrolase_sf"/>
</dbReference>
<dbReference type="InterPro" id="IPR045378">
    <property type="entry name" value="LNT_N"/>
</dbReference>
<dbReference type="NCBIfam" id="TIGR00546">
    <property type="entry name" value="lnt"/>
    <property type="match status" value="1"/>
</dbReference>
<dbReference type="PANTHER" id="PTHR38686">
    <property type="entry name" value="APOLIPOPROTEIN N-ACYLTRANSFERASE"/>
    <property type="match status" value="1"/>
</dbReference>
<dbReference type="PANTHER" id="PTHR38686:SF1">
    <property type="entry name" value="APOLIPOPROTEIN N-ACYLTRANSFERASE"/>
    <property type="match status" value="1"/>
</dbReference>
<dbReference type="Pfam" id="PF00795">
    <property type="entry name" value="CN_hydrolase"/>
    <property type="match status" value="1"/>
</dbReference>
<dbReference type="Pfam" id="PF20154">
    <property type="entry name" value="LNT_N"/>
    <property type="match status" value="1"/>
</dbReference>
<dbReference type="SUPFAM" id="SSF56317">
    <property type="entry name" value="Carbon-nitrogen hydrolase"/>
    <property type="match status" value="1"/>
</dbReference>
<dbReference type="PROSITE" id="PS50263">
    <property type="entry name" value="CN_HYDROLASE"/>
    <property type="match status" value="1"/>
</dbReference>
<keyword id="KW-0012">Acyltransferase</keyword>
<keyword id="KW-0997">Cell inner membrane</keyword>
<keyword id="KW-1003">Cell membrane</keyword>
<keyword id="KW-0472">Membrane</keyword>
<keyword id="KW-0808">Transferase</keyword>
<keyword id="KW-0812">Transmembrane</keyword>
<keyword id="KW-1133">Transmembrane helix</keyword>
<comment type="function">
    <text evidence="1">Catalyzes the phospholipid dependent N-acylation of the N-terminal cysteine of apolipoprotein, the last step in lipoprotein maturation.</text>
</comment>
<comment type="catalytic activity">
    <reaction evidence="1">
        <text>N-terminal S-1,2-diacyl-sn-glyceryl-L-cysteinyl-[lipoprotein] + a glycerophospholipid = N-acyl-S-1,2-diacyl-sn-glyceryl-L-cysteinyl-[lipoprotein] + a 2-acyl-sn-glycero-3-phospholipid + H(+)</text>
        <dbReference type="Rhea" id="RHEA:48228"/>
        <dbReference type="Rhea" id="RHEA-COMP:14681"/>
        <dbReference type="Rhea" id="RHEA-COMP:14684"/>
        <dbReference type="ChEBI" id="CHEBI:15378"/>
        <dbReference type="ChEBI" id="CHEBI:136912"/>
        <dbReference type="ChEBI" id="CHEBI:140656"/>
        <dbReference type="ChEBI" id="CHEBI:140657"/>
        <dbReference type="ChEBI" id="CHEBI:140660"/>
        <dbReference type="EC" id="2.3.1.269"/>
    </reaction>
</comment>
<comment type="pathway">
    <text evidence="1">Protein modification; lipoprotein biosynthesis (N-acyl transfer).</text>
</comment>
<comment type="subcellular location">
    <subcellularLocation>
        <location evidence="1">Cell inner membrane</location>
        <topology evidence="1">Multi-pass membrane protein</topology>
    </subcellularLocation>
</comment>
<comment type="similarity">
    <text evidence="1">Belongs to the CN hydrolase family. Apolipoprotein N-acyltransferase subfamily.</text>
</comment>
<proteinExistence type="inferred from homology"/>
<organism>
    <name type="scientific">Rhizobium etli (strain CIAT 652)</name>
    <dbReference type="NCBI Taxonomy" id="491916"/>
    <lineage>
        <taxon>Bacteria</taxon>
        <taxon>Pseudomonadati</taxon>
        <taxon>Pseudomonadota</taxon>
        <taxon>Alphaproteobacteria</taxon>
        <taxon>Hyphomicrobiales</taxon>
        <taxon>Rhizobiaceae</taxon>
        <taxon>Rhizobium/Agrobacterium group</taxon>
        <taxon>Rhizobium</taxon>
    </lineage>
</organism>
<reference key="1">
    <citation type="journal article" date="2010" name="Appl. Environ. Microbiol.">
        <title>Conserved symbiotic plasmid DNA sequences in the multireplicon pangenomic structure of Rhizobium etli.</title>
        <authorList>
            <person name="Gonzalez V."/>
            <person name="Acosta J.L."/>
            <person name="Santamaria R.I."/>
            <person name="Bustos P."/>
            <person name="Fernandez J.L."/>
            <person name="Hernandez Gonzalez I.L."/>
            <person name="Diaz R."/>
            <person name="Flores M."/>
            <person name="Palacios R."/>
            <person name="Mora J."/>
            <person name="Davila G."/>
        </authorList>
    </citation>
    <scope>NUCLEOTIDE SEQUENCE [LARGE SCALE GENOMIC DNA]</scope>
    <source>
        <strain>CIAT 652</strain>
    </source>
</reference>
<gene>
    <name evidence="1" type="primary">lnt</name>
    <name type="ordered locus">RHECIAT_CH0000412</name>
</gene>
<name>LNT_RHIE6</name>
<protein>
    <recommendedName>
        <fullName evidence="1">Apolipoprotein N-acyltransferase</fullName>
        <shortName evidence="1">ALP N-acyltransferase</shortName>
        <ecNumber evidence="1">2.3.1.269</ecNumber>
    </recommendedName>
</protein>
<feature type="chain" id="PRO_1000137481" description="Apolipoprotein N-acyltransferase">
    <location>
        <begin position="1"/>
        <end position="534"/>
    </location>
</feature>
<feature type="transmembrane region" description="Helical" evidence="1">
    <location>
        <begin position="8"/>
        <end position="28"/>
    </location>
</feature>
<feature type="transmembrane region" description="Helical" evidence="1">
    <location>
        <begin position="31"/>
        <end position="51"/>
    </location>
</feature>
<feature type="transmembrane region" description="Helical" evidence="1">
    <location>
        <begin position="69"/>
        <end position="89"/>
    </location>
</feature>
<feature type="transmembrane region" description="Helical" evidence="1">
    <location>
        <begin position="105"/>
        <end position="125"/>
    </location>
</feature>
<feature type="transmembrane region" description="Helical" evidence="1">
    <location>
        <begin position="127"/>
        <end position="147"/>
    </location>
</feature>
<feature type="transmembrane region" description="Helical" evidence="1">
    <location>
        <begin position="178"/>
        <end position="198"/>
    </location>
</feature>
<feature type="transmembrane region" description="Helical" evidence="1">
    <location>
        <begin position="208"/>
        <end position="228"/>
    </location>
</feature>
<feature type="transmembrane region" description="Helical" evidence="1">
    <location>
        <begin position="511"/>
        <end position="531"/>
    </location>
</feature>
<feature type="domain" description="CN hydrolase" evidence="1">
    <location>
        <begin position="246"/>
        <end position="496"/>
    </location>
</feature>
<feature type="active site" description="Proton acceptor" evidence="1">
    <location>
        <position position="291"/>
    </location>
</feature>
<feature type="active site" evidence="1">
    <location>
        <position position="355"/>
    </location>
</feature>
<feature type="active site" description="Nucleophile" evidence="1">
    <location>
        <position position="408"/>
    </location>
</feature>
<sequence length="534" mass="57592">MERLADRVILVWGFKRSLLAIGAGAFAVLALPPFGFFAAMFLSFTLLVWLIDGAAASPESGLIGRLWPAFAVGWLFGFGYFVAGLWWLGHALLVDSEEFAWALPLAILGLPACLAIFYGLAVALARIFWSDGMGRIAALAAGFGLMEWLRSVILTGFPWNAIGYGLMPVPLMMQSAHVIGAMGVTALAVFVFSAPALFGTRQGARTGVALAVLLFAAHLGYGAYALYLAPRPAPLPEDKRPVVRLVQPDIDQAAKMDNDADRNAIFETHLKLSAEAPRNGGRKPNIIVWPETSIPFILTDNQDALTRIADTLDDDQILIAGAVRAEEMGPGTPVRYYNSIYVIDGRGQIIAASDKVHLVPFGEYLPLEELLTELGIQNVVEVPGGFSAAASRHLLALPGGLNLYPLICYEIIFPDEMTGDIKDANALLNLTNDAWFGMTPGPYQHFLQARVRAVETGLPLIRDANSGISALVNAHGEIIAGLDLGETGFIDATVDSLSEGFGSTYPRQTYFWLTEALLILIALISREGFIFGLN</sequence>
<evidence type="ECO:0000255" key="1">
    <source>
        <dbReference type="HAMAP-Rule" id="MF_01148"/>
    </source>
</evidence>